<organism>
    <name type="scientific">Shigella flexneri</name>
    <dbReference type="NCBI Taxonomy" id="623"/>
    <lineage>
        <taxon>Bacteria</taxon>
        <taxon>Pseudomonadati</taxon>
        <taxon>Pseudomonadota</taxon>
        <taxon>Gammaproteobacteria</taxon>
        <taxon>Enterobacterales</taxon>
        <taxon>Enterobacteriaceae</taxon>
        <taxon>Shigella</taxon>
    </lineage>
</organism>
<accession>P0AFI8</accession>
<accession>P28225</accession>
<name>PDXH_SHIFL</name>
<feature type="initiator methionine" description="Removed" evidence="1">
    <location>
        <position position="1"/>
    </location>
</feature>
<feature type="chain" id="PRO_0000167757" description="Pyridoxine/pyridoxamine 5'-phosphate oxidase">
    <location>
        <begin position="2"/>
        <end position="218"/>
    </location>
</feature>
<feature type="binding site" evidence="2">
    <location>
        <begin position="14"/>
        <end position="17"/>
    </location>
    <ligand>
        <name>substrate</name>
    </ligand>
</feature>
<feature type="binding site" evidence="2">
    <location>
        <begin position="67"/>
        <end position="72"/>
    </location>
    <ligand>
        <name>FMN</name>
        <dbReference type="ChEBI" id="CHEBI:58210"/>
    </ligand>
</feature>
<feature type="binding site" evidence="2">
    <location>
        <position position="72"/>
    </location>
    <ligand>
        <name>substrate</name>
    </ligand>
</feature>
<feature type="binding site" evidence="2">
    <location>
        <begin position="82"/>
        <end position="83"/>
    </location>
    <ligand>
        <name>FMN</name>
        <dbReference type="ChEBI" id="CHEBI:58210"/>
    </ligand>
</feature>
<feature type="binding site" evidence="2">
    <location>
        <position position="88"/>
    </location>
    <ligand>
        <name>FMN</name>
        <dbReference type="ChEBI" id="CHEBI:58210"/>
    </ligand>
</feature>
<feature type="binding site" evidence="2">
    <location>
        <position position="89"/>
    </location>
    <ligand>
        <name>FMN</name>
        <dbReference type="ChEBI" id="CHEBI:58210"/>
    </ligand>
</feature>
<feature type="binding site" evidence="2">
    <location>
        <position position="111"/>
    </location>
    <ligand>
        <name>FMN</name>
        <dbReference type="ChEBI" id="CHEBI:58210"/>
    </ligand>
</feature>
<feature type="binding site" evidence="2">
    <location>
        <position position="129"/>
    </location>
    <ligand>
        <name>substrate</name>
    </ligand>
</feature>
<feature type="binding site" evidence="2">
    <location>
        <position position="133"/>
    </location>
    <ligand>
        <name>substrate</name>
    </ligand>
</feature>
<feature type="binding site" evidence="2">
    <location>
        <position position="137"/>
    </location>
    <ligand>
        <name>substrate</name>
    </ligand>
</feature>
<feature type="binding site" evidence="2">
    <location>
        <begin position="146"/>
        <end position="147"/>
    </location>
    <ligand>
        <name>FMN</name>
        <dbReference type="ChEBI" id="CHEBI:58210"/>
    </ligand>
</feature>
<feature type="binding site" evidence="2">
    <location>
        <position position="191"/>
    </location>
    <ligand>
        <name>FMN</name>
        <dbReference type="ChEBI" id="CHEBI:58210"/>
    </ligand>
</feature>
<feature type="binding site" evidence="2">
    <location>
        <begin position="197"/>
        <end position="199"/>
    </location>
    <ligand>
        <name>substrate</name>
    </ligand>
</feature>
<feature type="binding site" evidence="2">
    <location>
        <position position="201"/>
    </location>
    <ligand>
        <name>FMN</name>
        <dbReference type="ChEBI" id="CHEBI:58210"/>
    </ligand>
</feature>
<protein>
    <recommendedName>
        <fullName evidence="2">Pyridoxine/pyridoxamine 5'-phosphate oxidase</fullName>
        <ecNumber evidence="2">1.4.3.5</ecNumber>
    </recommendedName>
    <alternativeName>
        <fullName evidence="2">PNP/PMP oxidase</fullName>
        <shortName evidence="2">PNPOx</shortName>
    </alternativeName>
    <alternativeName>
        <fullName evidence="2">Pyridoxal 5'-phosphate synthase</fullName>
    </alternativeName>
</protein>
<comment type="function">
    <text evidence="2">Catalyzes the oxidation of either pyridoxine 5'-phosphate (PNP) or pyridoxamine 5'-phosphate (PMP) into pyridoxal 5'-phosphate (PLP).</text>
</comment>
<comment type="catalytic activity">
    <reaction evidence="2">
        <text>pyridoxamine 5'-phosphate + O2 + H2O = pyridoxal 5'-phosphate + H2O2 + NH4(+)</text>
        <dbReference type="Rhea" id="RHEA:15817"/>
        <dbReference type="ChEBI" id="CHEBI:15377"/>
        <dbReference type="ChEBI" id="CHEBI:15379"/>
        <dbReference type="ChEBI" id="CHEBI:16240"/>
        <dbReference type="ChEBI" id="CHEBI:28938"/>
        <dbReference type="ChEBI" id="CHEBI:58451"/>
        <dbReference type="ChEBI" id="CHEBI:597326"/>
        <dbReference type="EC" id="1.4.3.5"/>
    </reaction>
</comment>
<comment type="catalytic activity">
    <reaction evidence="2">
        <text>pyridoxine 5'-phosphate + O2 = pyridoxal 5'-phosphate + H2O2</text>
        <dbReference type="Rhea" id="RHEA:15149"/>
        <dbReference type="ChEBI" id="CHEBI:15379"/>
        <dbReference type="ChEBI" id="CHEBI:16240"/>
        <dbReference type="ChEBI" id="CHEBI:58589"/>
        <dbReference type="ChEBI" id="CHEBI:597326"/>
        <dbReference type="EC" id="1.4.3.5"/>
    </reaction>
</comment>
<comment type="cofactor">
    <cofactor evidence="2">
        <name>FMN</name>
        <dbReference type="ChEBI" id="CHEBI:58210"/>
    </cofactor>
    <text evidence="2">Binds 1 FMN per subunit.</text>
</comment>
<comment type="pathway">
    <text evidence="2">Cofactor metabolism; pyridoxal 5'-phosphate salvage; pyridoxal 5'-phosphate from pyridoxamine 5'-phosphate: step 1/1.</text>
</comment>
<comment type="pathway">
    <text evidence="2">Cofactor metabolism; pyridoxal 5'-phosphate salvage; pyridoxal 5'-phosphate from pyridoxine 5'-phosphate: step 1/1.</text>
</comment>
<comment type="subunit">
    <text evidence="2">Homodimer.</text>
</comment>
<comment type="similarity">
    <text evidence="2">Belongs to the pyridoxamine 5'-phosphate oxidase family.</text>
</comment>
<sequence>MSDNDELQQIAHLRREYTKGGLRRRDLPADPLTLFERWLSQACEAKLADPTAMVVATVDEHGQPYQRIVLLKHYDEKGMVFYTNLGSRKAHQIENNPRVSLLFPWHTLERQVMVIGKAERLSTLEVMKYFHSRPRDSQIGAWVSKQSSRISARGILESKFLELKQKFQQGEVPLPSFWGGFRVSLEQIEFWQGGEHRLHDRFLYQRENDAWKIDRLAP</sequence>
<evidence type="ECO:0000250" key="1"/>
<evidence type="ECO:0000255" key="2">
    <source>
        <dbReference type="HAMAP-Rule" id="MF_01629"/>
    </source>
</evidence>
<gene>
    <name evidence="2" type="primary">pdxH</name>
    <name type="ordered locus">SF1663</name>
    <name type="ordered locus">S1795</name>
</gene>
<proteinExistence type="inferred from homology"/>
<reference key="1">
    <citation type="journal article" date="2002" name="Nucleic Acids Res.">
        <title>Genome sequence of Shigella flexneri 2a: insights into pathogenicity through comparison with genomes of Escherichia coli K12 and O157.</title>
        <authorList>
            <person name="Jin Q."/>
            <person name="Yuan Z."/>
            <person name="Xu J."/>
            <person name="Wang Y."/>
            <person name="Shen Y."/>
            <person name="Lu W."/>
            <person name="Wang J."/>
            <person name="Liu H."/>
            <person name="Yang J."/>
            <person name="Yang F."/>
            <person name="Zhang X."/>
            <person name="Zhang J."/>
            <person name="Yang G."/>
            <person name="Wu H."/>
            <person name="Qu D."/>
            <person name="Dong J."/>
            <person name="Sun L."/>
            <person name="Xue Y."/>
            <person name="Zhao A."/>
            <person name="Gao Y."/>
            <person name="Zhu J."/>
            <person name="Kan B."/>
            <person name="Ding K."/>
            <person name="Chen S."/>
            <person name="Cheng H."/>
            <person name="Yao Z."/>
            <person name="He B."/>
            <person name="Chen R."/>
            <person name="Ma D."/>
            <person name="Qiang B."/>
            <person name="Wen Y."/>
            <person name="Hou Y."/>
            <person name="Yu J."/>
        </authorList>
    </citation>
    <scope>NUCLEOTIDE SEQUENCE [LARGE SCALE GENOMIC DNA]</scope>
    <source>
        <strain>301 / Serotype 2a</strain>
    </source>
</reference>
<reference key="2">
    <citation type="journal article" date="2003" name="Infect. Immun.">
        <title>Complete genome sequence and comparative genomics of Shigella flexneri serotype 2a strain 2457T.</title>
        <authorList>
            <person name="Wei J."/>
            <person name="Goldberg M.B."/>
            <person name="Burland V."/>
            <person name="Venkatesan M.M."/>
            <person name="Deng W."/>
            <person name="Fournier G."/>
            <person name="Mayhew G.F."/>
            <person name="Plunkett G. III"/>
            <person name="Rose D.J."/>
            <person name="Darling A."/>
            <person name="Mau B."/>
            <person name="Perna N.T."/>
            <person name="Payne S.M."/>
            <person name="Runyen-Janecky L.J."/>
            <person name="Zhou S."/>
            <person name="Schwartz D.C."/>
            <person name="Blattner F.R."/>
        </authorList>
    </citation>
    <scope>NUCLEOTIDE SEQUENCE [LARGE SCALE GENOMIC DNA]</scope>
    <source>
        <strain>ATCC 700930 / 2457T / Serotype 2a</strain>
    </source>
</reference>
<dbReference type="EC" id="1.4.3.5" evidence="2"/>
<dbReference type="EMBL" id="AE005674">
    <property type="protein sequence ID" value="AAN43245.1"/>
    <property type="molecule type" value="Genomic_DNA"/>
</dbReference>
<dbReference type="EMBL" id="AE014073">
    <property type="protein sequence ID" value="AAP17131.1"/>
    <property type="molecule type" value="Genomic_DNA"/>
</dbReference>
<dbReference type="RefSeq" id="NP_707538.1">
    <property type="nucleotide sequence ID" value="NC_004337.2"/>
</dbReference>
<dbReference type="RefSeq" id="WP_001282319.1">
    <property type="nucleotide sequence ID" value="NZ_WPGW01000065.1"/>
</dbReference>
<dbReference type="SMR" id="P0AFI8"/>
<dbReference type="STRING" id="198214.SF1663"/>
<dbReference type="PaxDb" id="198214-SF1663"/>
<dbReference type="GeneID" id="1024832"/>
<dbReference type="GeneID" id="75171699"/>
<dbReference type="KEGG" id="sfl:SF1663"/>
<dbReference type="KEGG" id="sfx:S1795"/>
<dbReference type="PATRIC" id="fig|198214.7.peg.1959"/>
<dbReference type="HOGENOM" id="CLU_032263_2_2_6"/>
<dbReference type="UniPathway" id="UPA01068">
    <property type="reaction ID" value="UER00304"/>
</dbReference>
<dbReference type="UniPathway" id="UPA01068">
    <property type="reaction ID" value="UER00305"/>
</dbReference>
<dbReference type="Proteomes" id="UP000001006">
    <property type="component" value="Chromosome"/>
</dbReference>
<dbReference type="Proteomes" id="UP000002673">
    <property type="component" value="Chromosome"/>
</dbReference>
<dbReference type="GO" id="GO:0010181">
    <property type="term" value="F:FMN binding"/>
    <property type="evidence" value="ECO:0007669"/>
    <property type="project" value="UniProtKB-UniRule"/>
</dbReference>
<dbReference type="GO" id="GO:0004733">
    <property type="term" value="F:pyridoxamine phosphate oxidase activity"/>
    <property type="evidence" value="ECO:0007669"/>
    <property type="project" value="UniProtKB-UniRule"/>
</dbReference>
<dbReference type="GO" id="GO:0008615">
    <property type="term" value="P:pyridoxine biosynthetic process"/>
    <property type="evidence" value="ECO:0007669"/>
    <property type="project" value="UniProtKB-KW"/>
</dbReference>
<dbReference type="FunFam" id="2.30.110.10:FF:000001">
    <property type="entry name" value="Pyridoxine/pyridoxamine 5'-phosphate oxidase"/>
    <property type="match status" value="1"/>
</dbReference>
<dbReference type="Gene3D" id="2.30.110.10">
    <property type="entry name" value="Electron Transport, Fmn-binding Protein, Chain A"/>
    <property type="match status" value="1"/>
</dbReference>
<dbReference type="HAMAP" id="MF_01629">
    <property type="entry name" value="PdxH"/>
    <property type="match status" value="1"/>
</dbReference>
<dbReference type="InterPro" id="IPR000659">
    <property type="entry name" value="Pyridox_Oxase"/>
</dbReference>
<dbReference type="InterPro" id="IPR019740">
    <property type="entry name" value="Pyridox_Oxase_CS"/>
</dbReference>
<dbReference type="InterPro" id="IPR011576">
    <property type="entry name" value="Pyridox_Oxase_N"/>
</dbReference>
<dbReference type="InterPro" id="IPR019576">
    <property type="entry name" value="Pyridoxamine_oxidase_dimer_C"/>
</dbReference>
<dbReference type="InterPro" id="IPR012349">
    <property type="entry name" value="Split_barrel_FMN-bd"/>
</dbReference>
<dbReference type="NCBIfam" id="TIGR00558">
    <property type="entry name" value="pdxH"/>
    <property type="match status" value="1"/>
</dbReference>
<dbReference type="NCBIfam" id="NF004231">
    <property type="entry name" value="PRK05679.1"/>
    <property type="match status" value="1"/>
</dbReference>
<dbReference type="PANTHER" id="PTHR10851:SF0">
    <property type="entry name" value="PYRIDOXINE-5'-PHOSPHATE OXIDASE"/>
    <property type="match status" value="1"/>
</dbReference>
<dbReference type="PANTHER" id="PTHR10851">
    <property type="entry name" value="PYRIDOXINE-5-PHOSPHATE OXIDASE"/>
    <property type="match status" value="1"/>
</dbReference>
<dbReference type="Pfam" id="PF10590">
    <property type="entry name" value="PNP_phzG_C"/>
    <property type="match status" value="1"/>
</dbReference>
<dbReference type="Pfam" id="PF01243">
    <property type="entry name" value="PNPOx_N"/>
    <property type="match status" value="1"/>
</dbReference>
<dbReference type="PIRSF" id="PIRSF000190">
    <property type="entry name" value="Pyd_amn-ph_oxd"/>
    <property type="match status" value="1"/>
</dbReference>
<dbReference type="SUPFAM" id="SSF50475">
    <property type="entry name" value="FMN-binding split barrel"/>
    <property type="match status" value="1"/>
</dbReference>
<dbReference type="PROSITE" id="PS01064">
    <property type="entry name" value="PYRIDOX_OXIDASE"/>
    <property type="match status" value="1"/>
</dbReference>
<keyword id="KW-0285">Flavoprotein</keyword>
<keyword id="KW-0288">FMN</keyword>
<keyword id="KW-0560">Oxidoreductase</keyword>
<keyword id="KW-0664">Pyridoxine biosynthesis</keyword>
<keyword id="KW-1185">Reference proteome</keyword>